<reference key="1">
    <citation type="journal article" date="2001" name="Nature">
        <title>Genome sequence of Yersinia pestis, the causative agent of plague.</title>
        <authorList>
            <person name="Parkhill J."/>
            <person name="Wren B.W."/>
            <person name="Thomson N.R."/>
            <person name="Titball R.W."/>
            <person name="Holden M.T.G."/>
            <person name="Prentice M.B."/>
            <person name="Sebaihia M."/>
            <person name="James K.D."/>
            <person name="Churcher C.M."/>
            <person name="Mungall K.L."/>
            <person name="Baker S."/>
            <person name="Basham D."/>
            <person name="Bentley S.D."/>
            <person name="Brooks K."/>
            <person name="Cerdeno-Tarraga A.-M."/>
            <person name="Chillingworth T."/>
            <person name="Cronin A."/>
            <person name="Davies R.M."/>
            <person name="Davis P."/>
            <person name="Dougan G."/>
            <person name="Feltwell T."/>
            <person name="Hamlin N."/>
            <person name="Holroyd S."/>
            <person name="Jagels K."/>
            <person name="Karlyshev A.V."/>
            <person name="Leather S."/>
            <person name="Moule S."/>
            <person name="Oyston P.C.F."/>
            <person name="Quail M.A."/>
            <person name="Rutherford K.M."/>
            <person name="Simmonds M."/>
            <person name="Skelton J."/>
            <person name="Stevens K."/>
            <person name="Whitehead S."/>
            <person name="Barrell B.G."/>
        </authorList>
    </citation>
    <scope>NUCLEOTIDE SEQUENCE [LARGE SCALE GENOMIC DNA]</scope>
    <source>
        <strain>CO-92 / Biovar Orientalis</strain>
    </source>
</reference>
<reference key="2">
    <citation type="journal article" date="2002" name="J. Bacteriol.">
        <title>Genome sequence of Yersinia pestis KIM.</title>
        <authorList>
            <person name="Deng W."/>
            <person name="Burland V."/>
            <person name="Plunkett G. III"/>
            <person name="Boutin A."/>
            <person name="Mayhew G.F."/>
            <person name="Liss P."/>
            <person name="Perna N.T."/>
            <person name="Rose D.J."/>
            <person name="Mau B."/>
            <person name="Zhou S."/>
            <person name="Schwartz D.C."/>
            <person name="Fetherston J.D."/>
            <person name="Lindler L.E."/>
            <person name="Brubaker R.R."/>
            <person name="Plano G.V."/>
            <person name="Straley S.C."/>
            <person name="McDonough K.A."/>
            <person name="Nilles M.L."/>
            <person name="Matson J.S."/>
            <person name="Blattner F.R."/>
            <person name="Perry R.D."/>
        </authorList>
    </citation>
    <scope>NUCLEOTIDE SEQUENCE [LARGE SCALE GENOMIC DNA]</scope>
    <source>
        <strain>KIM10+ / Biovar Mediaevalis</strain>
    </source>
</reference>
<reference key="3">
    <citation type="journal article" date="2004" name="DNA Res.">
        <title>Complete genome sequence of Yersinia pestis strain 91001, an isolate avirulent to humans.</title>
        <authorList>
            <person name="Song Y."/>
            <person name="Tong Z."/>
            <person name="Wang J."/>
            <person name="Wang L."/>
            <person name="Guo Z."/>
            <person name="Han Y."/>
            <person name="Zhang J."/>
            <person name="Pei D."/>
            <person name="Zhou D."/>
            <person name="Qin H."/>
            <person name="Pang X."/>
            <person name="Han Y."/>
            <person name="Zhai J."/>
            <person name="Li M."/>
            <person name="Cui B."/>
            <person name="Qi Z."/>
            <person name="Jin L."/>
            <person name="Dai R."/>
            <person name="Chen F."/>
            <person name="Li S."/>
            <person name="Ye C."/>
            <person name="Du Z."/>
            <person name="Lin W."/>
            <person name="Wang J."/>
            <person name="Yu J."/>
            <person name="Yang H."/>
            <person name="Wang J."/>
            <person name="Huang P."/>
            <person name="Yang R."/>
        </authorList>
    </citation>
    <scope>NUCLEOTIDE SEQUENCE [LARGE SCALE GENOMIC DNA]</scope>
    <source>
        <strain>91001 / Biovar Mediaevalis</strain>
    </source>
</reference>
<dbReference type="EMBL" id="AL590842">
    <property type="protein sequence ID" value="CAL19790.1"/>
    <property type="molecule type" value="Genomic_DNA"/>
</dbReference>
<dbReference type="EMBL" id="AE009952">
    <property type="protein sequence ID" value="AAM86605.1"/>
    <property type="molecule type" value="Genomic_DNA"/>
</dbReference>
<dbReference type="EMBL" id="AE017042">
    <property type="protein sequence ID" value="AAS61282.1"/>
    <property type="molecule type" value="Genomic_DNA"/>
</dbReference>
<dbReference type="PIR" id="AD0138">
    <property type="entry name" value="AD0138"/>
</dbReference>
<dbReference type="RefSeq" id="WP_002210738.1">
    <property type="nucleotide sequence ID" value="NZ_WUCM01000016.1"/>
</dbReference>
<dbReference type="RefSeq" id="YP_002346167.1">
    <property type="nucleotide sequence ID" value="NC_003143.1"/>
</dbReference>
<dbReference type="PDB" id="4PWZ">
    <property type="method" value="X-ray"/>
    <property type="resolution" value="1.73 A"/>
    <property type="chains" value="A/B=23-430"/>
</dbReference>
<dbReference type="PDB" id="4R40">
    <property type="method" value="X-ray"/>
    <property type="resolution" value="2.50 A"/>
    <property type="chains" value="A/C=23-430"/>
</dbReference>
<dbReference type="PDBsum" id="4PWZ"/>
<dbReference type="PDBsum" id="4R40"/>
<dbReference type="SMR" id="Q8ZGZ1"/>
<dbReference type="IntAct" id="Q8ZGZ1">
    <property type="interactions" value="1"/>
</dbReference>
<dbReference type="STRING" id="214092.YPO1124"/>
<dbReference type="PaxDb" id="214092-YPO1124"/>
<dbReference type="DNASU" id="1148002"/>
<dbReference type="EnsemblBacteria" id="AAS61282">
    <property type="protein sequence ID" value="AAS61282"/>
    <property type="gene ID" value="YP_1032"/>
</dbReference>
<dbReference type="GeneID" id="57977261"/>
<dbReference type="KEGG" id="ype:YPO1124"/>
<dbReference type="KEGG" id="ypk:y3055"/>
<dbReference type="KEGG" id="ypm:YP_1032"/>
<dbReference type="PATRIC" id="fig|214092.21.peg.1417"/>
<dbReference type="eggNOG" id="COG0823">
    <property type="taxonomic scope" value="Bacteria"/>
</dbReference>
<dbReference type="HOGENOM" id="CLU_047123_0_0_6"/>
<dbReference type="OMA" id="VREPSWG"/>
<dbReference type="OrthoDB" id="9802240at2"/>
<dbReference type="EvolutionaryTrace" id="Q8ZGZ1"/>
<dbReference type="Proteomes" id="UP000000815">
    <property type="component" value="Chromosome"/>
</dbReference>
<dbReference type="Proteomes" id="UP000001019">
    <property type="component" value="Chromosome"/>
</dbReference>
<dbReference type="Proteomes" id="UP000002490">
    <property type="component" value="Chromosome"/>
</dbReference>
<dbReference type="GO" id="GO:0042597">
    <property type="term" value="C:periplasmic space"/>
    <property type="evidence" value="ECO:0007669"/>
    <property type="project" value="UniProtKB-SubCell"/>
</dbReference>
<dbReference type="GO" id="GO:0051301">
    <property type="term" value="P:cell division"/>
    <property type="evidence" value="ECO:0007669"/>
    <property type="project" value="UniProtKB-UniRule"/>
</dbReference>
<dbReference type="GO" id="GO:0017038">
    <property type="term" value="P:protein import"/>
    <property type="evidence" value="ECO:0007669"/>
    <property type="project" value="InterPro"/>
</dbReference>
<dbReference type="FunFam" id="2.120.10.30:FF:000022">
    <property type="entry name" value="Tol-Pal system protein TolB"/>
    <property type="match status" value="1"/>
</dbReference>
<dbReference type="Gene3D" id="2.120.10.30">
    <property type="entry name" value="TolB, C-terminal domain"/>
    <property type="match status" value="1"/>
</dbReference>
<dbReference type="Gene3D" id="3.40.50.10070">
    <property type="entry name" value="TolB, N-terminal domain"/>
    <property type="match status" value="1"/>
</dbReference>
<dbReference type="HAMAP" id="MF_00671">
    <property type="entry name" value="TolB"/>
    <property type="match status" value="1"/>
</dbReference>
<dbReference type="InterPro" id="IPR011042">
    <property type="entry name" value="6-blade_b-propeller_TolB-like"/>
</dbReference>
<dbReference type="InterPro" id="IPR011659">
    <property type="entry name" value="PD40"/>
</dbReference>
<dbReference type="InterPro" id="IPR014167">
    <property type="entry name" value="Tol-Pal_TolB"/>
</dbReference>
<dbReference type="InterPro" id="IPR007195">
    <property type="entry name" value="TolB_N"/>
</dbReference>
<dbReference type="NCBIfam" id="TIGR02800">
    <property type="entry name" value="propeller_TolB"/>
    <property type="match status" value="1"/>
</dbReference>
<dbReference type="PANTHER" id="PTHR36842:SF1">
    <property type="entry name" value="PROTEIN TOLB"/>
    <property type="match status" value="1"/>
</dbReference>
<dbReference type="PANTHER" id="PTHR36842">
    <property type="entry name" value="PROTEIN TOLB HOMOLOG"/>
    <property type="match status" value="1"/>
</dbReference>
<dbReference type="Pfam" id="PF07676">
    <property type="entry name" value="PD40"/>
    <property type="match status" value="4"/>
</dbReference>
<dbReference type="Pfam" id="PF04052">
    <property type="entry name" value="TolB_N"/>
    <property type="match status" value="1"/>
</dbReference>
<dbReference type="SUPFAM" id="SSF52964">
    <property type="entry name" value="TolB, N-terminal domain"/>
    <property type="match status" value="1"/>
</dbReference>
<dbReference type="SUPFAM" id="SSF69304">
    <property type="entry name" value="Tricorn protease N-terminal domain"/>
    <property type="match status" value="1"/>
</dbReference>
<sequence>MKQAFRVALGFLVLWASVLHAEVRIEITQGVDSARPIGVVPFKWMGPGTPPEEIGAIVGADLRNSGKFNPIDAARMPQQPSTAAEVTPAAWTALGIDAVVVGQVQPSADGSYVVSYQLVDTSGSAGSILAQNQYKVTKQWLRYSAHTVSDEVFEKLTGIKGAFRTRIAYVVKTNGGKFPHELRVSDYDGYNQFVVHRSPEPLMSPAWSPDGSKIAYVTFESGKSALVIQTLANGAIRQVASFPRHNGAPAFSPDGTKLAFALSKSGSLNLYVMDLASGQISQVTDGRSNNTEPSWFPDSQNLAYTSDQGGRPQVYKVNINGGVPQRITWEGSQNQNADVSPDGKFLVLVSSNGGAQHIAKQDLETGAVQVLTDTLLDETPSIAPNGTMVIYSSTQGLGSVLQLVSTDGRFKARLPATDGQVKFPAWSPYL</sequence>
<keyword id="KW-0002">3D-structure</keyword>
<keyword id="KW-0131">Cell cycle</keyword>
<keyword id="KW-0132">Cell division</keyword>
<keyword id="KW-0574">Periplasm</keyword>
<keyword id="KW-1185">Reference proteome</keyword>
<keyword id="KW-0732">Signal</keyword>
<gene>
    <name evidence="1" type="primary">tolB</name>
    <name type="ordered locus">YPO1124</name>
    <name type="ordered locus">y3055</name>
    <name type="ordered locus">YP_1032</name>
</gene>
<feature type="signal peptide" evidence="1">
    <location>
        <begin position="1"/>
        <end position="21"/>
    </location>
</feature>
<feature type="chain" id="PRO_0000034702" description="Tol-Pal system protein TolB" evidence="1">
    <location>
        <begin position="22"/>
        <end position="430"/>
    </location>
</feature>
<feature type="strand" evidence="2">
    <location>
        <begin position="26"/>
        <end position="29"/>
    </location>
</feature>
<feature type="strand" evidence="2">
    <location>
        <begin position="34"/>
        <end position="39"/>
    </location>
</feature>
<feature type="strand" evidence="2">
    <location>
        <begin position="46"/>
        <end position="48"/>
    </location>
</feature>
<feature type="helix" evidence="2">
    <location>
        <begin position="54"/>
        <end position="64"/>
    </location>
</feature>
<feature type="strand" evidence="2">
    <location>
        <begin position="67"/>
        <end position="70"/>
    </location>
</feature>
<feature type="helix" evidence="2">
    <location>
        <begin position="73"/>
        <end position="75"/>
    </location>
</feature>
<feature type="helix" evidence="2">
    <location>
        <begin position="83"/>
        <end position="85"/>
    </location>
</feature>
<feature type="helix" evidence="2">
    <location>
        <begin position="88"/>
        <end position="92"/>
    </location>
</feature>
<feature type="turn" evidence="2">
    <location>
        <begin position="93"/>
        <end position="95"/>
    </location>
</feature>
<feature type="strand" evidence="2">
    <location>
        <begin position="98"/>
        <end position="106"/>
    </location>
</feature>
<feature type="strand" evidence="2">
    <location>
        <begin position="112"/>
        <end position="120"/>
    </location>
</feature>
<feature type="strand" evidence="2">
    <location>
        <begin position="122"/>
        <end position="125"/>
    </location>
</feature>
<feature type="strand" evidence="2">
    <location>
        <begin position="127"/>
        <end position="136"/>
    </location>
</feature>
<feature type="helix" evidence="2">
    <location>
        <begin position="138"/>
        <end position="140"/>
    </location>
</feature>
<feature type="helix" evidence="2">
    <location>
        <begin position="141"/>
        <end position="157"/>
    </location>
</feature>
<feature type="strand" evidence="2">
    <location>
        <begin position="166"/>
        <end position="172"/>
    </location>
</feature>
<feature type="strand" evidence="2">
    <location>
        <begin position="174"/>
        <end position="177"/>
    </location>
</feature>
<feature type="strand" evidence="2">
    <location>
        <begin position="180"/>
        <end position="186"/>
    </location>
</feature>
<feature type="strand" evidence="2">
    <location>
        <begin position="193"/>
        <end position="200"/>
    </location>
</feature>
<feature type="strand" evidence="2">
    <location>
        <begin position="202"/>
        <end position="207"/>
    </location>
</feature>
<feature type="strand" evidence="2">
    <location>
        <begin position="211"/>
        <end position="218"/>
    </location>
</feature>
<feature type="strand" evidence="2">
    <location>
        <begin position="222"/>
        <end position="230"/>
    </location>
</feature>
<feature type="turn" evidence="2">
    <location>
        <begin position="231"/>
        <end position="233"/>
    </location>
</feature>
<feature type="strand" evidence="2">
    <location>
        <begin position="236"/>
        <end position="242"/>
    </location>
</feature>
<feature type="strand" evidence="2">
    <location>
        <begin position="247"/>
        <end position="251"/>
    </location>
</feature>
<feature type="strand" evidence="2">
    <location>
        <begin position="255"/>
        <end position="262"/>
    </location>
</feature>
<feature type="strand" evidence="2">
    <location>
        <begin position="269"/>
        <end position="274"/>
    </location>
</feature>
<feature type="turn" evidence="2">
    <location>
        <begin position="275"/>
        <end position="277"/>
    </location>
</feature>
<feature type="strand" evidence="2">
    <location>
        <begin position="280"/>
        <end position="282"/>
    </location>
</feature>
<feature type="strand" evidence="2">
    <location>
        <begin position="290"/>
        <end position="295"/>
    </location>
</feature>
<feature type="strand" evidence="2">
    <location>
        <begin position="299"/>
        <end position="306"/>
    </location>
</feature>
<feature type="strand" evidence="2">
    <location>
        <begin position="313"/>
        <end position="318"/>
    </location>
</feature>
<feature type="strand" evidence="2">
    <location>
        <begin position="330"/>
        <end position="339"/>
    </location>
</feature>
<feature type="strand" evidence="2">
    <location>
        <begin position="343"/>
        <end position="351"/>
    </location>
</feature>
<feature type="strand" evidence="2">
    <location>
        <begin position="357"/>
        <end position="362"/>
    </location>
</feature>
<feature type="turn" evidence="2">
    <location>
        <begin position="363"/>
        <end position="365"/>
    </location>
</feature>
<feature type="strand" evidence="2">
    <location>
        <begin position="368"/>
        <end position="370"/>
    </location>
</feature>
<feature type="strand" evidence="2">
    <location>
        <begin position="375"/>
        <end position="382"/>
    </location>
</feature>
<feature type="strand" evidence="2">
    <location>
        <begin position="386"/>
        <end position="395"/>
    </location>
</feature>
<feature type="strand" evidence="2">
    <location>
        <begin position="398"/>
        <end position="405"/>
    </location>
</feature>
<feature type="strand" evidence="2">
    <location>
        <begin position="411"/>
        <end position="413"/>
    </location>
</feature>
<feature type="strand" evidence="2">
    <location>
        <begin position="418"/>
        <end position="426"/>
    </location>
</feature>
<accession>Q8ZGZ1</accession>
<accession>Q0WHS1</accession>
<comment type="function">
    <text evidence="1">Part of the Tol-Pal system, which plays a role in outer membrane invagination during cell division and is important for maintaining outer membrane integrity. TolB occupies a key intermediary position in the Tol-Pal system because it communicates directly with both membrane-embedded components, Pal in the outer membrane and TolA in the inner membrane.</text>
</comment>
<comment type="subunit">
    <text evidence="1">The Tol-Pal system is composed of five core proteins: the inner membrane proteins TolA, TolQ and TolR, the periplasmic protein TolB and the outer membrane protein Pal. They form a network linking the inner and outer membranes and the peptidoglycan layer.</text>
</comment>
<comment type="subcellular location">
    <subcellularLocation>
        <location evidence="1">Periplasm</location>
    </subcellularLocation>
</comment>
<comment type="similarity">
    <text evidence="1">Belongs to the TolB family.</text>
</comment>
<protein>
    <recommendedName>
        <fullName evidence="1">Tol-Pal system protein TolB</fullName>
    </recommendedName>
</protein>
<name>TOLB_YERPE</name>
<organism>
    <name type="scientific">Yersinia pestis</name>
    <dbReference type="NCBI Taxonomy" id="632"/>
    <lineage>
        <taxon>Bacteria</taxon>
        <taxon>Pseudomonadati</taxon>
        <taxon>Pseudomonadota</taxon>
        <taxon>Gammaproteobacteria</taxon>
        <taxon>Enterobacterales</taxon>
        <taxon>Yersiniaceae</taxon>
        <taxon>Yersinia</taxon>
    </lineage>
</organism>
<proteinExistence type="evidence at protein level"/>
<evidence type="ECO:0000255" key="1">
    <source>
        <dbReference type="HAMAP-Rule" id="MF_00671"/>
    </source>
</evidence>
<evidence type="ECO:0007829" key="2">
    <source>
        <dbReference type="PDB" id="4PWZ"/>
    </source>
</evidence>